<reference key="1">
    <citation type="journal article" date="2005" name="J. Bacteriol.">
        <title>Completion of the genome sequence of Brucella abortus and comparison to the highly similar genomes of Brucella melitensis and Brucella suis.</title>
        <authorList>
            <person name="Halling S.M."/>
            <person name="Peterson-Burch B.D."/>
            <person name="Bricker B.J."/>
            <person name="Zuerner R.L."/>
            <person name="Qing Z."/>
            <person name="Li L.-L."/>
            <person name="Kapur V."/>
            <person name="Alt D.P."/>
            <person name="Olsen S.C."/>
        </authorList>
    </citation>
    <scope>NUCLEOTIDE SEQUENCE [LARGE SCALE GENOMIC DNA]</scope>
    <source>
        <strain>9-941</strain>
    </source>
</reference>
<keyword id="KW-0067">ATP-binding</keyword>
<keyword id="KW-0315">Glutamine amidotransferase</keyword>
<keyword id="KW-0332">GMP biosynthesis</keyword>
<keyword id="KW-0436">Ligase</keyword>
<keyword id="KW-0547">Nucleotide-binding</keyword>
<keyword id="KW-0658">Purine biosynthesis</keyword>
<protein>
    <recommendedName>
        <fullName evidence="1">GMP synthase [glutamine-hydrolyzing]</fullName>
        <ecNumber evidence="1">6.3.5.2</ecNumber>
    </recommendedName>
    <alternativeName>
        <fullName evidence="1">GMP synthetase</fullName>
    </alternativeName>
    <alternativeName>
        <fullName evidence="1">Glutamine amidotransferase</fullName>
    </alternativeName>
</protein>
<proteinExistence type="inferred from homology"/>
<dbReference type="EC" id="6.3.5.2" evidence="1"/>
<dbReference type="EMBL" id="AE017224">
    <property type="protein sequence ID" value="AAX76214.1"/>
    <property type="molecule type" value="Genomic_DNA"/>
</dbReference>
<dbReference type="RefSeq" id="WP_002966228.1">
    <property type="nucleotide sequence ID" value="NC_006933.1"/>
</dbReference>
<dbReference type="SMR" id="Q577H0"/>
<dbReference type="EnsemblBacteria" id="AAX76214">
    <property type="protein sequence ID" value="AAX76214"/>
    <property type="gene ID" value="BruAb2_0821"/>
</dbReference>
<dbReference type="GeneID" id="97535486"/>
<dbReference type="KEGG" id="bmb:BruAb2_0821"/>
<dbReference type="HOGENOM" id="CLU_014340_0_5_5"/>
<dbReference type="UniPathway" id="UPA00189">
    <property type="reaction ID" value="UER00296"/>
</dbReference>
<dbReference type="Proteomes" id="UP000000540">
    <property type="component" value="Chromosome II"/>
</dbReference>
<dbReference type="GO" id="GO:0005829">
    <property type="term" value="C:cytosol"/>
    <property type="evidence" value="ECO:0007669"/>
    <property type="project" value="TreeGrafter"/>
</dbReference>
<dbReference type="GO" id="GO:0005524">
    <property type="term" value="F:ATP binding"/>
    <property type="evidence" value="ECO:0007669"/>
    <property type="project" value="UniProtKB-UniRule"/>
</dbReference>
<dbReference type="GO" id="GO:0003921">
    <property type="term" value="F:GMP synthase activity"/>
    <property type="evidence" value="ECO:0007669"/>
    <property type="project" value="InterPro"/>
</dbReference>
<dbReference type="CDD" id="cd01742">
    <property type="entry name" value="GATase1_GMP_Synthase"/>
    <property type="match status" value="1"/>
</dbReference>
<dbReference type="CDD" id="cd01997">
    <property type="entry name" value="GMP_synthase_C"/>
    <property type="match status" value="1"/>
</dbReference>
<dbReference type="FunFam" id="3.30.300.10:FF:000002">
    <property type="entry name" value="GMP synthase [glutamine-hydrolyzing]"/>
    <property type="match status" value="1"/>
</dbReference>
<dbReference type="FunFam" id="3.40.50.620:FF:000001">
    <property type="entry name" value="GMP synthase [glutamine-hydrolyzing]"/>
    <property type="match status" value="1"/>
</dbReference>
<dbReference type="FunFam" id="3.40.50.880:FF:000001">
    <property type="entry name" value="GMP synthase [glutamine-hydrolyzing]"/>
    <property type="match status" value="1"/>
</dbReference>
<dbReference type="Gene3D" id="3.30.300.10">
    <property type="match status" value="1"/>
</dbReference>
<dbReference type="Gene3D" id="3.40.50.880">
    <property type="match status" value="1"/>
</dbReference>
<dbReference type="Gene3D" id="3.40.50.620">
    <property type="entry name" value="HUPs"/>
    <property type="match status" value="1"/>
</dbReference>
<dbReference type="HAMAP" id="MF_00344">
    <property type="entry name" value="GMP_synthase"/>
    <property type="match status" value="1"/>
</dbReference>
<dbReference type="InterPro" id="IPR029062">
    <property type="entry name" value="Class_I_gatase-like"/>
</dbReference>
<dbReference type="InterPro" id="IPR017926">
    <property type="entry name" value="GATASE"/>
</dbReference>
<dbReference type="InterPro" id="IPR001674">
    <property type="entry name" value="GMP_synth_C"/>
</dbReference>
<dbReference type="InterPro" id="IPR004739">
    <property type="entry name" value="GMP_synth_GATase"/>
</dbReference>
<dbReference type="InterPro" id="IPR022955">
    <property type="entry name" value="GMP_synthase"/>
</dbReference>
<dbReference type="InterPro" id="IPR025777">
    <property type="entry name" value="GMPS_ATP_PPase_dom"/>
</dbReference>
<dbReference type="InterPro" id="IPR022310">
    <property type="entry name" value="NAD/GMP_synthase"/>
</dbReference>
<dbReference type="InterPro" id="IPR014729">
    <property type="entry name" value="Rossmann-like_a/b/a_fold"/>
</dbReference>
<dbReference type="NCBIfam" id="TIGR00884">
    <property type="entry name" value="guaA_Cterm"/>
    <property type="match status" value="1"/>
</dbReference>
<dbReference type="NCBIfam" id="TIGR00888">
    <property type="entry name" value="guaA_Nterm"/>
    <property type="match status" value="1"/>
</dbReference>
<dbReference type="NCBIfam" id="NF000848">
    <property type="entry name" value="PRK00074.1"/>
    <property type="match status" value="1"/>
</dbReference>
<dbReference type="PANTHER" id="PTHR11922:SF2">
    <property type="entry name" value="GMP SYNTHASE [GLUTAMINE-HYDROLYZING]"/>
    <property type="match status" value="1"/>
</dbReference>
<dbReference type="PANTHER" id="PTHR11922">
    <property type="entry name" value="GMP SYNTHASE-RELATED"/>
    <property type="match status" value="1"/>
</dbReference>
<dbReference type="Pfam" id="PF00117">
    <property type="entry name" value="GATase"/>
    <property type="match status" value="1"/>
</dbReference>
<dbReference type="Pfam" id="PF00958">
    <property type="entry name" value="GMP_synt_C"/>
    <property type="match status" value="1"/>
</dbReference>
<dbReference type="Pfam" id="PF02540">
    <property type="entry name" value="NAD_synthase"/>
    <property type="match status" value="1"/>
</dbReference>
<dbReference type="PRINTS" id="PR00097">
    <property type="entry name" value="ANTSNTHASEII"/>
</dbReference>
<dbReference type="PRINTS" id="PR00096">
    <property type="entry name" value="GATASE"/>
</dbReference>
<dbReference type="SUPFAM" id="SSF52402">
    <property type="entry name" value="Adenine nucleotide alpha hydrolases-like"/>
    <property type="match status" value="1"/>
</dbReference>
<dbReference type="SUPFAM" id="SSF52317">
    <property type="entry name" value="Class I glutamine amidotransferase-like"/>
    <property type="match status" value="1"/>
</dbReference>
<dbReference type="SUPFAM" id="SSF54810">
    <property type="entry name" value="GMP synthetase C-terminal dimerisation domain"/>
    <property type="match status" value="1"/>
</dbReference>
<dbReference type="PROSITE" id="PS51273">
    <property type="entry name" value="GATASE_TYPE_1"/>
    <property type="match status" value="1"/>
</dbReference>
<dbReference type="PROSITE" id="PS51553">
    <property type="entry name" value="GMPS_ATP_PPASE"/>
    <property type="match status" value="1"/>
</dbReference>
<comment type="function">
    <text evidence="1">Catalyzes the synthesis of GMP from XMP.</text>
</comment>
<comment type="catalytic activity">
    <reaction evidence="1">
        <text>XMP + L-glutamine + ATP + H2O = GMP + L-glutamate + AMP + diphosphate + 2 H(+)</text>
        <dbReference type="Rhea" id="RHEA:11680"/>
        <dbReference type="ChEBI" id="CHEBI:15377"/>
        <dbReference type="ChEBI" id="CHEBI:15378"/>
        <dbReference type="ChEBI" id="CHEBI:29985"/>
        <dbReference type="ChEBI" id="CHEBI:30616"/>
        <dbReference type="ChEBI" id="CHEBI:33019"/>
        <dbReference type="ChEBI" id="CHEBI:57464"/>
        <dbReference type="ChEBI" id="CHEBI:58115"/>
        <dbReference type="ChEBI" id="CHEBI:58359"/>
        <dbReference type="ChEBI" id="CHEBI:456215"/>
        <dbReference type="EC" id="6.3.5.2"/>
    </reaction>
</comment>
<comment type="pathway">
    <text evidence="1">Purine metabolism; GMP biosynthesis; GMP from XMP (L-Gln route): step 1/1.</text>
</comment>
<comment type="subunit">
    <text evidence="1">Homodimer.</text>
</comment>
<sequence>MSTTAYPDTILIIDFGSQVTQLIARRVREANVYCEIVPFQSADEAFKRLQPKGVILSGSPHSTTDIGSPRAPQAIFDAGIPVLGICYGEQTMCAQLGGNVESGHDREFGRAFLDVQEDSPLFAGIWAKGTRHQVWMSHGDRVTSLPDGFTIIGTSPNAPYAVIADEKRKYYGVQFHPEVVHTPDGAKLLQNFVHRIVGVKPGWTMGAYREQAVEAIRKQVGSGKVICALSGGVDSSVAALLAHEAVGDQLTCILVDHGLMRKDEAQQVVEMFREHYNLPLILVDASDRFIGALEGESDPEKKRKTIGRLFIEVFEEEARKLGGADFLVQGTLYPDVIESVSFTGGPSVTIKSHHNVGGLPERMKMQLVEPLRELFKDEVRLLGKELGLPDSFIGRHPFPGPGLAIRCPGGVTREKLEILREADAIYLDEIRKAGLYDAIWQAFAVLLPVQTVGVMGDGRTYEFVCALRAVTSVDGMTADFYHYDMNFLGNAATRIINEVRGINRVVYDVTSKPPGTIEWE</sequence>
<organism>
    <name type="scientific">Brucella abortus biovar 1 (strain 9-941)</name>
    <dbReference type="NCBI Taxonomy" id="262698"/>
    <lineage>
        <taxon>Bacteria</taxon>
        <taxon>Pseudomonadati</taxon>
        <taxon>Pseudomonadota</taxon>
        <taxon>Alphaproteobacteria</taxon>
        <taxon>Hyphomicrobiales</taxon>
        <taxon>Brucellaceae</taxon>
        <taxon>Brucella/Ochrobactrum group</taxon>
        <taxon>Brucella</taxon>
    </lineage>
</organism>
<evidence type="ECO:0000255" key="1">
    <source>
        <dbReference type="HAMAP-Rule" id="MF_00344"/>
    </source>
</evidence>
<gene>
    <name evidence="1" type="primary">guaA</name>
    <name type="ordered locus">BruAb2_0821</name>
</gene>
<accession>Q577H0</accession>
<feature type="chain" id="PRO_0000229409" description="GMP synthase [glutamine-hydrolyzing]">
    <location>
        <begin position="1"/>
        <end position="520"/>
    </location>
</feature>
<feature type="domain" description="Glutamine amidotransferase type-1" evidence="1">
    <location>
        <begin position="9"/>
        <end position="202"/>
    </location>
</feature>
<feature type="domain" description="GMPS ATP-PPase" evidence="1">
    <location>
        <begin position="203"/>
        <end position="395"/>
    </location>
</feature>
<feature type="active site" description="Nucleophile" evidence="1">
    <location>
        <position position="86"/>
    </location>
</feature>
<feature type="active site" evidence="1">
    <location>
        <position position="176"/>
    </location>
</feature>
<feature type="active site" evidence="1">
    <location>
        <position position="178"/>
    </location>
</feature>
<feature type="binding site" evidence="1">
    <location>
        <begin position="230"/>
        <end position="236"/>
    </location>
    <ligand>
        <name>ATP</name>
        <dbReference type="ChEBI" id="CHEBI:30616"/>
    </ligand>
</feature>
<name>GUAA_BRUAB</name>